<accession>Q9XCY0</accession>
<accession>Q7C3J3</accession>
<dbReference type="EC" id="2.4.99.28" evidence="2"/>
<dbReference type="EMBL" id="AF123260">
    <property type="protein sequence ID" value="AAD39750.1"/>
    <property type="molecule type" value="Genomic_DNA"/>
</dbReference>
<dbReference type="EMBL" id="AE016828">
    <property type="protein sequence ID" value="AAO89696.1"/>
    <property type="molecule type" value="Genomic_DNA"/>
</dbReference>
<dbReference type="RefSeq" id="NP_819182.1">
    <property type="nucleotide sequence ID" value="NC_002971.4"/>
</dbReference>
<dbReference type="RefSeq" id="WP_010957396.1">
    <property type="nucleotide sequence ID" value="NZ_CCYB01000063.1"/>
</dbReference>
<dbReference type="SMR" id="Q9XCY0"/>
<dbReference type="STRING" id="227377.CBU_0132"/>
<dbReference type="EnsemblBacteria" id="AAO89696">
    <property type="protein sequence ID" value="AAO89696"/>
    <property type="gene ID" value="CBU_0132"/>
</dbReference>
<dbReference type="GeneID" id="1208003"/>
<dbReference type="KEGG" id="cbu:CBU_0132"/>
<dbReference type="PATRIC" id="fig|227377.7.peg.134"/>
<dbReference type="eggNOG" id="COG0772">
    <property type="taxonomic scope" value="Bacteria"/>
</dbReference>
<dbReference type="HOGENOM" id="CLU_029243_1_1_6"/>
<dbReference type="OrthoDB" id="9768187at2"/>
<dbReference type="UniPathway" id="UPA00219"/>
<dbReference type="Proteomes" id="UP000002671">
    <property type="component" value="Chromosome"/>
</dbReference>
<dbReference type="GO" id="GO:0032153">
    <property type="term" value="C:cell division site"/>
    <property type="evidence" value="ECO:0000318"/>
    <property type="project" value="GO_Central"/>
</dbReference>
<dbReference type="GO" id="GO:0005886">
    <property type="term" value="C:plasma membrane"/>
    <property type="evidence" value="ECO:0000318"/>
    <property type="project" value="GO_Central"/>
</dbReference>
<dbReference type="GO" id="GO:0015648">
    <property type="term" value="F:lipid-linked peptidoglycan transporter activity"/>
    <property type="evidence" value="ECO:0000318"/>
    <property type="project" value="GO_Central"/>
</dbReference>
<dbReference type="GO" id="GO:0008955">
    <property type="term" value="F:peptidoglycan glycosyltransferase activity"/>
    <property type="evidence" value="ECO:0007669"/>
    <property type="project" value="UniProtKB-UniRule"/>
</dbReference>
<dbReference type="GO" id="GO:0051301">
    <property type="term" value="P:cell division"/>
    <property type="evidence" value="ECO:0000318"/>
    <property type="project" value="GO_Central"/>
</dbReference>
<dbReference type="GO" id="GO:0071555">
    <property type="term" value="P:cell wall organization"/>
    <property type="evidence" value="ECO:0007669"/>
    <property type="project" value="UniProtKB-KW"/>
</dbReference>
<dbReference type="GO" id="GO:0043093">
    <property type="term" value="P:FtsZ-dependent cytokinesis"/>
    <property type="evidence" value="ECO:0007669"/>
    <property type="project" value="UniProtKB-UniRule"/>
</dbReference>
<dbReference type="GO" id="GO:0009252">
    <property type="term" value="P:peptidoglycan biosynthetic process"/>
    <property type="evidence" value="ECO:0007669"/>
    <property type="project" value="UniProtKB-UniRule"/>
</dbReference>
<dbReference type="GO" id="GO:0008360">
    <property type="term" value="P:regulation of cell shape"/>
    <property type="evidence" value="ECO:0000318"/>
    <property type="project" value="GO_Central"/>
</dbReference>
<dbReference type="HAMAP" id="MF_00913">
    <property type="entry name" value="PGT_FtsW_proteobact"/>
    <property type="match status" value="1"/>
</dbReference>
<dbReference type="InterPro" id="IPR018365">
    <property type="entry name" value="Cell_cycle_FtsW-rel_CS"/>
</dbReference>
<dbReference type="InterPro" id="IPR013437">
    <property type="entry name" value="FtsW"/>
</dbReference>
<dbReference type="InterPro" id="IPR001182">
    <property type="entry name" value="FtsW/RodA"/>
</dbReference>
<dbReference type="NCBIfam" id="TIGR02614">
    <property type="entry name" value="ftsW"/>
    <property type="match status" value="1"/>
</dbReference>
<dbReference type="PANTHER" id="PTHR30474">
    <property type="entry name" value="CELL CYCLE PROTEIN"/>
    <property type="match status" value="1"/>
</dbReference>
<dbReference type="PANTHER" id="PTHR30474:SF2">
    <property type="entry name" value="PEPTIDOGLYCAN GLYCOSYLTRANSFERASE FTSW-RELATED"/>
    <property type="match status" value="1"/>
</dbReference>
<dbReference type="Pfam" id="PF01098">
    <property type="entry name" value="FTSW_RODA_SPOVE"/>
    <property type="match status" value="1"/>
</dbReference>
<dbReference type="PROSITE" id="PS00428">
    <property type="entry name" value="FTSW_RODA_SPOVE"/>
    <property type="match status" value="1"/>
</dbReference>
<keyword id="KW-0131">Cell cycle</keyword>
<keyword id="KW-0132">Cell division</keyword>
<keyword id="KW-0997">Cell inner membrane</keyword>
<keyword id="KW-1003">Cell membrane</keyword>
<keyword id="KW-0133">Cell shape</keyword>
<keyword id="KW-0961">Cell wall biogenesis/degradation</keyword>
<keyword id="KW-0328">Glycosyltransferase</keyword>
<keyword id="KW-0472">Membrane</keyword>
<keyword id="KW-0573">Peptidoglycan synthesis</keyword>
<keyword id="KW-1185">Reference proteome</keyword>
<keyword id="KW-0808">Transferase</keyword>
<keyword id="KW-0812">Transmembrane</keyword>
<keyword id="KW-1133">Transmembrane helix</keyword>
<feature type="chain" id="PRO_0000415179" description="Probable peptidoglycan glycosyltransferase FtsW">
    <location>
        <begin position="1"/>
        <end position="372"/>
    </location>
</feature>
<feature type="topological domain" description="Cytoplasmic" evidence="1">
    <location>
        <begin position="1"/>
        <end position="12"/>
    </location>
</feature>
<feature type="transmembrane region" description="Helical" evidence="2">
    <location>
        <begin position="13"/>
        <end position="33"/>
    </location>
</feature>
<feature type="topological domain" description="Periplasmic" evidence="1">
    <location>
        <begin position="34"/>
        <end position="45"/>
    </location>
</feature>
<feature type="transmembrane region" description="Helical" evidence="2">
    <location>
        <begin position="46"/>
        <end position="66"/>
    </location>
</feature>
<feature type="topological domain" description="Cytoplasmic" evidence="1">
    <location>
        <begin position="67"/>
        <end position="77"/>
    </location>
</feature>
<feature type="transmembrane region" description="Helical" evidence="2">
    <location>
        <begin position="78"/>
        <end position="98"/>
    </location>
</feature>
<feature type="topological domain" description="Periplasmic" evidence="1">
    <location>
        <begin position="99"/>
        <end position="109"/>
    </location>
</feature>
<feature type="transmembrane region" description="Helical" evidence="2">
    <location>
        <begin position="110"/>
        <end position="130"/>
    </location>
</feature>
<feature type="topological domain" description="Cytoplasmic" evidence="1">
    <location>
        <begin position="131"/>
        <end position="142"/>
    </location>
</feature>
<feature type="transmembrane region" description="Helical" evidence="2">
    <location>
        <begin position="143"/>
        <end position="163"/>
    </location>
</feature>
<feature type="topological domain" description="Periplasmic" evidence="1">
    <location>
        <begin position="164"/>
        <end position="165"/>
    </location>
</feature>
<feature type="transmembrane region" description="Helical" evidence="2">
    <location>
        <begin position="166"/>
        <end position="186"/>
    </location>
</feature>
<feature type="topological domain" description="Cytoplasmic" evidence="1">
    <location>
        <position position="187"/>
    </location>
</feature>
<feature type="transmembrane region" description="Helical" evidence="2">
    <location>
        <begin position="188"/>
        <end position="208"/>
    </location>
</feature>
<feature type="topological domain" description="Periplasmic" evidence="1">
    <location>
        <begin position="209"/>
        <end position="277"/>
    </location>
</feature>
<feature type="transmembrane region" description="Helical" evidence="2">
    <location>
        <begin position="278"/>
        <end position="298"/>
    </location>
</feature>
<feature type="topological domain" description="Cytoplasmic" evidence="1">
    <location>
        <begin position="299"/>
        <end position="315"/>
    </location>
</feature>
<feature type="transmembrane region" description="Helical" evidence="2">
    <location>
        <begin position="316"/>
        <end position="336"/>
    </location>
</feature>
<feature type="topological domain" description="Periplasmic" evidence="1">
    <location>
        <begin position="337"/>
        <end position="342"/>
    </location>
</feature>
<feature type="transmembrane region" description="Helical" evidence="2">
    <location>
        <begin position="343"/>
        <end position="363"/>
    </location>
</feature>
<feature type="topological domain" description="Cytoplasmic" evidence="1">
    <location>
        <begin position="364"/>
        <end position="372"/>
    </location>
</feature>
<name>FTSW_COXBU</name>
<proteinExistence type="inferred from homology"/>
<gene>
    <name evidence="2" type="primary">ftsW</name>
    <name type="ordered locus">CBU_0132</name>
</gene>
<protein>
    <recommendedName>
        <fullName evidence="2">Probable peptidoglycan glycosyltransferase FtsW</fullName>
        <shortName evidence="2">PGT</shortName>
        <ecNumber evidence="2">2.4.99.28</ecNumber>
    </recommendedName>
    <alternativeName>
        <fullName evidence="2">Cell division protein FtsW</fullName>
    </alternativeName>
    <alternativeName>
        <fullName evidence="2">Cell wall polymerase</fullName>
    </alternativeName>
    <alternativeName>
        <fullName evidence="2">Peptidoglycan polymerase</fullName>
        <shortName evidence="2">PG polymerase</shortName>
    </alternativeName>
</protein>
<evidence type="ECO:0000255" key="1"/>
<evidence type="ECO:0000255" key="2">
    <source>
        <dbReference type="HAMAP-Rule" id="MF_00913"/>
    </source>
</evidence>
<comment type="function">
    <text evidence="2">Peptidoglycan polymerase that is essential for cell division.</text>
</comment>
<comment type="catalytic activity">
    <reaction evidence="2">
        <text>[GlcNAc-(1-&gt;4)-Mur2Ac(oyl-L-Ala-gamma-D-Glu-L-Lys-D-Ala-D-Ala)](n)-di-trans,octa-cis-undecaprenyl diphosphate + beta-D-GlcNAc-(1-&gt;4)-Mur2Ac(oyl-L-Ala-gamma-D-Glu-L-Lys-D-Ala-D-Ala)-di-trans,octa-cis-undecaprenyl diphosphate = [GlcNAc-(1-&gt;4)-Mur2Ac(oyl-L-Ala-gamma-D-Glu-L-Lys-D-Ala-D-Ala)](n+1)-di-trans,octa-cis-undecaprenyl diphosphate + di-trans,octa-cis-undecaprenyl diphosphate + H(+)</text>
        <dbReference type="Rhea" id="RHEA:23708"/>
        <dbReference type="Rhea" id="RHEA-COMP:9602"/>
        <dbReference type="Rhea" id="RHEA-COMP:9603"/>
        <dbReference type="ChEBI" id="CHEBI:15378"/>
        <dbReference type="ChEBI" id="CHEBI:58405"/>
        <dbReference type="ChEBI" id="CHEBI:60033"/>
        <dbReference type="ChEBI" id="CHEBI:78435"/>
        <dbReference type="EC" id="2.4.99.28"/>
    </reaction>
</comment>
<comment type="pathway">
    <text evidence="2">Cell wall biogenesis; peptidoglycan biosynthesis.</text>
</comment>
<comment type="subcellular location">
    <subcellularLocation>
        <location evidence="2">Cell inner membrane</location>
        <topology evidence="2">Multi-pass membrane protein</topology>
    </subcellularLocation>
    <text evidence="2">Localizes to the division septum.</text>
</comment>
<comment type="similarity">
    <text evidence="2">Belongs to the SEDS family. FtsW subfamily.</text>
</comment>
<reference key="1">
    <citation type="submission" date="1999-01" db="EMBL/GenBank/DDBJ databases">
        <title>The cloning and analysis of a Coxiella burnetii cell division gene, ftsW.</title>
        <authorList>
            <person name="Dexter P.L."/>
            <person name="Seshu J."/>
            <person name="Mallavia L.P."/>
        </authorList>
    </citation>
    <scope>NUCLEOTIDE SEQUENCE [GENOMIC DNA]</scope>
    <source>
        <strain>Nine Mile phase I</strain>
    </source>
</reference>
<reference key="2">
    <citation type="journal article" date="2003" name="Proc. Natl. Acad. Sci. U.S.A.">
        <title>Complete genome sequence of the Q-fever pathogen, Coxiella burnetii.</title>
        <authorList>
            <person name="Seshadri R."/>
            <person name="Paulsen I.T."/>
            <person name="Eisen J.A."/>
            <person name="Read T.D."/>
            <person name="Nelson K.E."/>
            <person name="Nelson W.C."/>
            <person name="Ward N.L."/>
            <person name="Tettelin H."/>
            <person name="Davidsen T.M."/>
            <person name="Beanan M.J."/>
            <person name="DeBoy R.T."/>
            <person name="Daugherty S.C."/>
            <person name="Brinkac L.M."/>
            <person name="Madupu R."/>
            <person name="Dodson R.J."/>
            <person name="Khouri H.M."/>
            <person name="Lee K.H."/>
            <person name="Carty H.A."/>
            <person name="Scanlan D."/>
            <person name="Heinzen R.A."/>
            <person name="Thompson H.A."/>
            <person name="Samuel J.E."/>
            <person name="Fraser C.M."/>
            <person name="Heidelberg J.F."/>
        </authorList>
    </citation>
    <scope>NUCLEOTIDE SEQUENCE [LARGE SCALE GENOMIC DNA]</scope>
    <source>
        <strain>RSA 493 / Nine Mile phase I</strain>
    </source>
</reference>
<sequence>MQKKSTISWSYDAWIVICTLSLLALGLLMVASASMVISDRQFGYPFHYFIRHLIYLSLGLTLAWVASRVPIKVWKTYSGYLFLVGFLLLILVLAPVIGKTVNGSRRWIQLGFISLQVSEVVKFVTILYLASFLQRYQSEVQKELKGFLKPMLLVGILSGLLLLEPDFGAAVVITMTCLALLFLAGVRLWPFCVLLVLVAGSLILLAILSPYRLQRLTSFLNPWAHQFGSGYQLTQSLIAFGRGGLFGVGLGNSVQKLFYLPEAHTDFLFAVLAEELGLIGEILLMGLFVLLIGRIILIGRRAENSNQLYSAYLAYGIALWLGLQVIINIGVTAGVLPTKGLTLPFISYGGSSLLMNCLAIGVILRIAYETEN</sequence>
<organism>
    <name type="scientific">Coxiella burnetii (strain RSA 493 / Nine Mile phase I)</name>
    <dbReference type="NCBI Taxonomy" id="227377"/>
    <lineage>
        <taxon>Bacteria</taxon>
        <taxon>Pseudomonadati</taxon>
        <taxon>Pseudomonadota</taxon>
        <taxon>Gammaproteobacteria</taxon>
        <taxon>Legionellales</taxon>
        <taxon>Coxiellaceae</taxon>
        <taxon>Coxiella</taxon>
    </lineage>
</organism>